<feature type="chain" id="PRO_0000158135" description="Imidazoleglycerol-phosphate dehydratase">
    <location>
        <begin position="1"/>
        <end position="194"/>
    </location>
</feature>
<accession>Q88UE0</accession>
<accession>F9UR74</accession>
<keyword id="KW-0028">Amino-acid biosynthesis</keyword>
<keyword id="KW-0963">Cytoplasm</keyword>
<keyword id="KW-0368">Histidine biosynthesis</keyword>
<keyword id="KW-0456">Lyase</keyword>
<keyword id="KW-1185">Reference proteome</keyword>
<organism>
    <name type="scientific">Lactiplantibacillus plantarum (strain ATCC BAA-793 / NCIMB 8826 / WCFS1)</name>
    <name type="common">Lactobacillus plantarum</name>
    <dbReference type="NCBI Taxonomy" id="220668"/>
    <lineage>
        <taxon>Bacteria</taxon>
        <taxon>Bacillati</taxon>
        <taxon>Bacillota</taxon>
        <taxon>Bacilli</taxon>
        <taxon>Lactobacillales</taxon>
        <taxon>Lactobacillaceae</taxon>
        <taxon>Lactiplantibacillus</taxon>
    </lineage>
</organism>
<gene>
    <name evidence="1" type="primary">hisB</name>
    <name type="ordered locus">lp_2558</name>
</gene>
<proteinExistence type="inferred from homology"/>
<sequence length="194" mass="21477">MRQATIKRETKETQIEISLNLDEQSGIEIDTGIGFLNHMLNLFAKHGRFGLVVKCHGDLDVDPHHTTEDTGIVLGECFKQALGDKQGIERYGTEFVPMDETLGQVSVDLSGRSYLVFDAELTNPRLGGLDTETVEDFFQAVAFAAEMNLHARILYGRNTHHKVESLFKAFGRAMRAAVTINPDIQGVNSTKGVI</sequence>
<reference key="1">
    <citation type="journal article" date="2003" name="Proc. Natl. Acad. Sci. U.S.A.">
        <title>Complete genome sequence of Lactobacillus plantarum WCFS1.</title>
        <authorList>
            <person name="Kleerebezem M."/>
            <person name="Boekhorst J."/>
            <person name="van Kranenburg R."/>
            <person name="Molenaar D."/>
            <person name="Kuipers O.P."/>
            <person name="Leer R."/>
            <person name="Tarchini R."/>
            <person name="Peters S.A."/>
            <person name="Sandbrink H.M."/>
            <person name="Fiers M.W.E.J."/>
            <person name="Stiekema W."/>
            <person name="Klein Lankhorst R.M."/>
            <person name="Bron P.A."/>
            <person name="Hoffer S.M."/>
            <person name="Nierop Groot M.N."/>
            <person name="Kerkhoven R."/>
            <person name="De Vries M."/>
            <person name="Ursing B."/>
            <person name="De Vos W.M."/>
            <person name="Siezen R.J."/>
        </authorList>
    </citation>
    <scope>NUCLEOTIDE SEQUENCE [LARGE SCALE GENOMIC DNA]</scope>
    <source>
        <strain>ATCC BAA-793 / NCIMB 8826 / WCFS1</strain>
    </source>
</reference>
<reference key="2">
    <citation type="journal article" date="2012" name="J. Bacteriol.">
        <title>Complete resequencing and reannotation of the Lactobacillus plantarum WCFS1 genome.</title>
        <authorList>
            <person name="Siezen R.J."/>
            <person name="Francke C."/>
            <person name="Renckens B."/>
            <person name="Boekhorst J."/>
            <person name="Wels M."/>
            <person name="Kleerebezem M."/>
            <person name="van Hijum S.A."/>
        </authorList>
    </citation>
    <scope>NUCLEOTIDE SEQUENCE [LARGE SCALE GENOMIC DNA]</scope>
    <scope>GENOME REANNOTATION</scope>
    <source>
        <strain>ATCC BAA-793 / NCIMB 8826 / WCFS1</strain>
    </source>
</reference>
<name>HIS7_LACPL</name>
<dbReference type="EC" id="4.2.1.19" evidence="1"/>
<dbReference type="EMBL" id="AL935263">
    <property type="protein sequence ID" value="CCC79713.1"/>
    <property type="molecule type" value="Genomic_DNA"/>
</dbReference>
<dbReference type="RefSeq" id="WP_003644682.1">
    <property type="nucleotide sequence ID" value="NC_004567.2"/>
</dbReference>
<dbReference type="RefSeq" id="YP_004890227.1">
    <property type="nucleotide sequence ID" value="NC_004567.2"/>
</dbReference>
<dbReference type="SMR" id="Q88UE0"/>
<dbReference type="STRING" id="220668.lp_2558"/>
<dbReference type="EnsemblBacteria" id="CCC79713">
    <property type="protein sequence ID" value="CCC79713"/>
    <property type="gene ID" value="lp_2558"/>
</dbReference>
<dbReference type="GeneID" id="89669840"/>
<dbReference type="KEGG" id="lpl:lp_2558"/>
<dbReference type="PATRIC" id="fig|220668.9.peg.2149"/>
<dbReference type="eggNOG" id="COG0131">
    <property type="taxonomic scope" value="Bacteria"/>
</dbReference>
<dbReference type="HOGENOM" id="CLU_044308_3_0_9"/>
<dbReference type="OrthoDB" id="9790411at2"/>
<dbReference type="PhylomeDB" id="Q88UE0"/>
<dbReference type="UniPathway" id="UPA00031">
    <property type="reaction ID" value="UER00011"/>
</dbReference>
<dbReference type="Proteomes" id="UP000000432">
    <property type="component" value="Chromosome"/>
</dbReference>
<dbReference type="GO" id="GO:0005737">
    <property type="term" value="C:cytoplasm"/>
    <property type="evidence" value="ECO:0007669"/>
    <property type="project" value="UniProtKB-SubCell"/>
</dbReference>
<dbReference type="GO" id="GO:0004424">
    <property type="term" value="F:imidazoleglycerol-phosphate dehydratase activity"/>
    <property type="evidence" value="ECO:0007669"/>
    <property type="project" value="UniProtKB-UniRule"/>
</dbReference>
<dbReference type="GO" id="GO:0000105">
    <property type="term" value="P:L-histidine biosynthetic process"/>
    <property type="evidence" value="ECO:0007669"/>
    <property type="project" value="UniProtKB-UniRule"/>
</dbReference>
<dbReference type="CDD" id="cd07914">
    <property type="entry name" value="IGPD"/>
    <property type="match status" value="1"/>
</dbReference>
<dbReference type="FunFam" id="3.30.230.40:FF:000001">
    <property type="entry name" value="Imidazoleglycerol-phosphate dehydratase HisB"/>
    <property type="match status" value="1"/>
</dbReference>
<dbReference type="FunFam" id="3.30.230.40:FF:000003">
    <property type="entry name" value="Imidazoleglycerol-phosphate dehydratase HisB"/>
    <property type="match status" value="1"/>
</dbReference>
<dbReference type="Gene3D" id="3.30.230.40">
    <property type="entry name" value="Imidazole glycerol phosphate dehydratase, domain 1"/>
    <property type="match status" value="2"/>
</dbReference>
<dbReference type="HAMAP" id="MF_00076">
    <property type="entry name" value="HisB"/>
    <property type="match status" value="1"/>
</dbReference>
<dbReference type="InterPro" id="IPR038494">
    <property type="entry name" value="IGPD_sf"/>
</dbReference>
<dbReference type="InterPro" id="IPR000807">
    <property type="entry name" value="ImidazoleglycerolP_deHydtase"/>
</dbReference>
<dbReference type="InterPro" id="IPR020565">
    <property type="entry name" value="ImidazoleglycerP_deHydtase_CS"/>
</dbReference>
<dbReference type="InterPro" id="IPR020568">
    <property type="entry name" value="Ribosomal_Su5_D2-typ_SF"/>
</dbReference>
<dbReference type="NCBIfam" id="NF002107">
    <property type="entry name" value="PRK00951.1-2"/>
    <property type="match status" value="1"/>
</dbReference>
<dbReference type="NCBIfam" id="NF002111">
    <property type="entry name" value="PRK00951.2-1"/>
    <property type="match status" value="1"/>
</dbReference>
<dbReference type="NCBIfam" id="NF002114">
    <property type="entry name" value="PRK00951.2-4"/>
    <property type="match status" value="1"/>
</dbReference>
<dbReference type="PANTHER" id="PTHR23133:SF2">
    <property type="entry name" value="IMIDAZOLEGLYCEROL-PHOSPHATE DEHYDRATASE"/>
    <property type="match status" value="1"/>
</dbReference>
<dbReference type="PANTHER" id="PTHR23133">
    <property type="entry name" value="IMIDAZOLEGLYCEROL-PHOSPHATE DEHYDRATASE HIS7"/>
    <property type="match status" value="1"/>
</dbReference>
<dbReference type="Pfam" id="PF00475">
    <property type="entry name" value="IGPD"/>
    <property type="match status" value="1"/>
</dbReference>
<dbReference type="SUPFAM" id="SSF54211">
    <property type="entry name" value="Ribosomal protein S5 domain 2-like"/>
    <property type="match status" value="2"/>
</dbReference>
<dbReference type="PROSITE" id="PS00954">
    <property type="entry name" value="IGP_DEHYDRATASE_1"/>
    <property type="match status" value="1"/>
</dbReference>
<dbReference type="PROSITE" id="PS00955">
    <property type="entry name" value="IGP_DEHYDRATASE_2"/>
    <property type="match status" value="1"/>
</dbReference>
<protein>
    <recommendedName>
        <fullName evidence="1">Imidazoleglycerol-phosphate dehydratase</fullName>
        <shortName evidence="1">IGPD</shortName>
        <ecNumber evidence="1">4.2.1.19</ecNumber>
    </recommendedName>
</protein>
<evidence type="ECO:0000255" key="1">
    <source>
        <dbReference type="HAMAP-Rule" id="MF_00076"/>
    </source>
</evidence>
<comment type="catalytic activity">
    <reaction evidence="1">
        <text>D-erythro-1-(imidazol-4-yl)glycerol 3-phosphate = 3-(imidazol-4-yl)-2-oxopropyl phosphate + H2O</text>
        <dbReference type="Rhea" id="RHEA:11040"/>
        <dbReference type="ChEBI" id="CHEBI:15377"/>
        <dbReference type="ChEBI" id="CHEBI:57766"/>
        <dbReference type="ChEBI" id="CHEBI:58278"/>
        <dbReference type="EC" id="4.2.1.19"/>
    </reaction>
</comment>
<comment type="pathway">
    <text evidence="1">Amino-acid biosynthesis; L-histidine biosynthesis; L-histidine from 5-phospho-alpha-D-ribose 1-diphosphate: step 6/9.</text>
</comment>
<comment type="subcellular location">
    <subcellularLocation>
        <location evidence="1">Cytoplasm</location>
    </subcellularLocation>
</comment>
<comment type="similarity">
    <text evidence="1">Belongs to the imidazoleglycerol-phosphate dehydratase family.</text>
</comment>